<organism>
    <name type="scientific">Acinetobacter baylyi (strain ATCC 33305 / BD413 / ADP1)</name>
    <dbReference type="NCBI Taxonomy" id="62977"/>
    <lineage>
        <taxon>Bacteria</taxon>
        <taxon>Pseudomonadati</taxon>
        <taxon>Pseudomonadota</taxon>
        <taxon>Gammaproteobacteria</taxon>
        <taxon>Moraxellales</taxon>
        <taxon>Moraxellaceae</taxon>
        <taxon>Acinetobacter</taxon>
    </lineage>
</organism>
<feature type="chain" id="PRO_0000136087" description="Histidine--tRNA ligase">
    <location>
        <begin position="1"/>
        <end position="430"/>
    </location>
</feature>
<evidence type="ECO:0000255" key="1">
    <source>
        <dbReference type="HAMAP-Rule" id="MF_00127"/>
    </source>
</evidence>
<keyword id="KW-0030">Aminoacyl-tRNA synthetase</keyword>
<keyword id="KW-0067">ATP-binding</keyword>
<keyword id="KW-0963">Cytoplasm</keyword>
<keyword id="KW-0436">Ligase</keyword>
<keyword id="KW-0547">Nucleotide-binding</keyword>
<keyword id="KW-0648">Protein biosynthesis</keyword>
<comment type="catalytic activity">
    <reaction evidence="1">
        <text>tRNA(His) + L-histidine + ATP = L-histidyl-tRNA(His) + AMP + diphosphate + H(+)</text>
        <dbReference type="Rhea" id="RHEA:17313"/>
        <dbReference type="Rhea" id="RHEA-COMP:9665"/>
        <dbReference type="Rhea" id="RHEA-COMP:9689"/>
        <dbReference type="ChEBI" id="CHEBI:15378"/>
        <dbReference type="ChEBI" id="CHEBI:30616"/>
        <dbReference type="ChEBI" id="CHEBI:33019"/>
        <dbReference type="ChEBI" id="CHEBI:57595"/>
        <dbReference type="ChEBI" id="CHEBI:78442"/>
        <dbReference type="ChEBI" id="CHEBI:78527"/>
        <dbReference type="ChEBI" id="CHEBI:456215"/>
        <dbReference type="EC" id="6.1.1.21"/>
    </reaction>
</comment>
<comment type="subunit">
    <text evidence="1">Homodimer.</text>
</comment>
<comment type="subcellular location">
    <subcellularLocation>
        <location evidence="1">Cytoplasm</location>
    </subcellularLocation>
</comment>
<comment type="similarity">
    <text evidence="1">Belongs to the class-II aminoacyl-tRNA synthetase family.</text>
</comment>
<gene>
    <name evidence="1" type="primary">hisS</name>
    <name type="ordered locus">ACIAD0562</name>
</gene>
<name>SYH_ACIAD</name>
<sequence>MSSIVAIKGFNDVLPTQTAAWRRLEQHLASLMDAYGYQQIRLPIVEQTGLFKRAIGDATDIVEKEMYTFFDKGTPPESLTLRPEGTAGCVRAMLEHNLLRGATPRVWYVGPMFRYEKPQKGRYRQFHQFGVETFGVATPDIDAELILMTARLWKRMGVSEKVQLELNTLGEIDERAAYRTALVEFLTQHKEALDEDSQRRLGTNPLRILDSKVESTQKILENAPKLHDFLQEDSLAHFNQLQEYLTHAGVSFVINQKLVRGLDYYNKTVFEWTTTALGSQGTVCAGGRYDGLVGQLKGKADQSVPAVGFAMGMERLLLLLEQVEQAEVVRDCDVFLVAESAFQGHALVLAEQIRDQFEGLASTIRVKTGSQGSMKSQMKKADQSGAHYAVILGEREWTTQELTVKELATSEQSQVAISELVPFLVKKFEK</sequence>
<proteinExistence type="inferred from homology"/>
<dbReference type="EC" id="6.1.1.21" evidence="1"/>
<dbReference type="EMBL" id="CR543861">
    <property type="protein sequence ID" value="CAG67486.1"/>
    <property type="molecule type" value="Genomic_DNA"/>
</dbReference>
<dbReference type="RefSeq" id="WP_004919990.1">
    <property type="nucleotide sequence ID" value="NC_005966.1"/>
</dbReference>
<dbReference type="SMR" id="Q6FEM2"/>
<dbReference type="STRING" id="202950.GCA_001485005_00798"/>
<dbReference type="GeneID" id="45233039"/>
<dbReference type="KEGG" id="aci:ACIAD0562"/>
<dbReference type="eggNOG" id="COG0124">
    <property type="taxonomic scope" value="Bacteria"/>
</dbReference>
<dbReference type="HOGENOM" id="CLU_025113_1_0_6"/>
<dbReference type="OrthoDB" id="9800814at2"/>
<dbReference type="BioCyc" id="ASP62977:ACIAD_RS02555-MONOMER"/>
<dbReference type="Proteomes" id="UP000000430">
    <property type="component" value="Chromosome"/>
</dbReference>
<dbReference type="GO" id="GO:0005737">
    <property type="term" value="C:cytoplasm"/>
    <property type="evidence" value="ECO:0007669"/>
    <property type="project" value="UniProtKB-SubCell"/>
</dbReference>
<dbReference type="GO" id="GO:0005524">
    <property type="term" value="F:ATP binding"/>
    <property type="evidence" value="ECO:0007669"/>
    <property type="project" value="UniProtKB-UniRule"/>
</dbReference>
<dbReference type="GO" id="GO:0004821">
    <property type="term" value="F:histidine-tRNA ligase activity"/>
    <property type="evidence" value="ECO:0007669"/>
    <property type="project" value="UniProtKB-UniRule"/>
</dbReference>
<dbReference type="GO" id="GO:0006427">
    <property type="term" value="P:histidyl-tRNA aminoacylation"/>
    <property type="evidence" value="ECO:0007669"/>
    <property type="project" value="UniProtKB-UniRule"/>
</dbReference>
<dbReference type="CDD" id="cd00773">
    <property type="entry name" value="HisRS-like_core"/>
    <property type="match status" value="1"/>
</dbReference>
<dbReference type="FunFam" id="3.30.930.10:FF:000005">
    <property type="entry name" value="Histidine--tRNA ligase"/>
    <property type="match status" value="1"/>
</dbReference>
<dbReference type="Gene3D" id="3.40.50.800">
    <property type="entry name" value="Anticodon-binding domain"/>
    <property type="match status" value="1"/>
</dbReference>
<dbReference type="Gene3D" id="3.30.930.10">
    <property type="entry name" value="Bira Bifunctional Protein, Domain 2"/>
    <property type="match status" value="1"/>
</dbReference>
<dbReference type="HAMAP" id="MF_00127">
    <property type="entry name" value="His_tRNA_synth"/>
    <property type="match status" value="1"/>
</dbReference>
<dbReference type="InterPro" id="IPR006195">
    <property type="entry name" value="aa-tRNA-synth_II"/>
</dbReference>
<dbReference type="InterPro" id="IPR045864">
    <property type="entry name" value="aa-tRNA-synth_II/BPL/LPL"/>
</dbReference>
<dbReference type="InterPro" id="IPR004154">
    <property type="entry name" value="Anticodon-bd"/>
</dbReference>
<dbReference type="InterPro" id="IPR036621">
    <property type="entry name" value="Anticodon-bd_dom_sf"/>
</dbReference>
<dbReference type="InterPro" id="IPR015807">
    <property type="entry name" value="His-tRNA-ligase"/>
</dbReference>
<dbReference type="InterPro" id="IPR041715">
    <property type="entry name" value="HisRS-like_core"/>
</dbReference>
<dbReference type="InterPro" id="IPR004516">
    <property type="entry name" value="HisRS/HisZ"/>
</dbReference>
<dbReference type="NCBIfam" id="TIGR00442">
    <property type="entry name" value="hisS"/>
    <property type="match status" value="1"/>
</dbReference>
<dbReference type="PANTHER" id="PTHR43707:SF1">
    <property type="entry name" value="HISTIDINE--TRNA LIGASE, MITOCHONDRIAL-RELATED"/>
    <property type="match status" value="1"/>
</dbReference>
<dbReference type="PANTHER" id="PTHR43707">
    <property type="entry name" value="HISTIDYL-TRNA SYNTHETASE"/>
    <property type="match status" value="1"/>
</dbReference>
<dbReference type="Pfam" id="PF03129">
    <property type="entry name" value="HGTP_anticodon"/>
    <property type="match status" value="1"/>
</dbReference>
<dbReference type="Pfam" id="PF13393">
    <property type="entry name" value="tRNA-synt_His"/>
    <property type="match status" value="1"/>
</dbReference>
<dbReference type="PIRSF" id="PIRSF001549">
    <property type="entry name" value="His-tRNA_synth"/>
    <property type="match status" value="1"/>
</dbReference>
<dbReference type="SUPFAM" id="SSF52954">
    <property type="entry name" value="Class II aaRS ABD-related"/>
    <property type="match status" value="1"/>
</dbReference>
<dbReference type="SUPFAM" id="SSF55681">
    <property type="entry name" value="Class II aaRS and biotin synthetases"/>
    <property type="match status" value="1"/>
</dbReference>
<dbReference type="PROSITE" id="PS50862">
    <property type="entry name" value="AA_TRNA_LIGASE_II"/>
    <property type="match status" value="1"/>
</dbReference>
<protein>
    <recommendedName>
        <fullName evidence="1">Histidine--tRNA ligase</fullName>
        <ecNumber evidence="1">6.1.1.21</ecNumber>
    </recommendedName>
    <alternativeName>
        <fullName evidence="1">Histidyl-tRNA synthetase</fullName>
        <shortName evidence="1">HisRS</shortName>
    </alternativeName>
</protein>
<accession>Q6FEM2</accession>
<reference key="1">
    <citation type="journal article" date="2004" name="Nucleic Acids Res.">
        <title>Unique features revealed by the genome sequence of Acinetobacter sp. ADP1, a versatile and naturally transformation competent bacterium.</title>
        <authorList>
            <person name="Barbe V."/>
            <person name="Vallenet D."/>
            <person name="Fonknechten N."/>
            <person name="Kreimeyer A."/>
            <person name="Oztas S."/>
            <person name="Labarre L."/>
            <person name="Cruveiller S."/>
            <person name="Robert C."/>
            <person name="Duprat S."/>
            <person name="Wincker P."/>
            <person name="Ornston L.N."/>
            <person name="Weissenbach J."/>
            <person name="Marliere P."/>
            <person name="Cohen G.N."/>
            <person name="Medigue C."/>
        </authorList>
    </citation>
    <scope>NUCLEOTIDE SEQUENCE [LARGE SCALE GENOMIC DNA]</scope>
    <source>
        <strain>ATCC 33305 / BD413 / ADP1</strain>
    </source>
</reference>